<dbReference type="EC" id="6.1.1.3" evidence="1"/>
<dbReference type="EMBL" id="AE014133">
    <property type="protein sequence ID" value="AAN59229.1"/>
    <property type="molecule type" value="Genomic_DNA"/>
</dbReference>
<dbReference type="RefSeq" id="NP_721923.1">
    <property type="nucleotide sequence ID" value="NC_004350.2"/>
</dbReference>
<dbReference type="RefSeq" id="WP_002262802.1">
    <property type="nucleotide sequence ID" value="NC_004350.2"/>
</dbReference>
<dbReference type="SMR" id="Q8DT12"/>
<dbReference type="STRING" id="210007.SMU_1586"/>
<dbReference type="KEGG" id="smu:SMU_1586"/>
<dbReference type="PATRIC" id="fig|210007.7.peg.1411"/>
<dbReference type="eggNOG" id="COG0441">
    <property type="taxonomic scope" value="Bacteria"/>
</dbReference>
<dbReference type="HOGENOM" id="CLU_008554_0_1_9"/>
<dbReference type="OrthoDB" id="9802304at2"/>
<dbReference type="PhylomeDB" id="Q8DT12"/>
<dbReference type="Proteomes" id="UP000002512">
    <property type="component" value="Chromosome"/>
</dbReference>
<dbReference type="GO" id="GO:0005737">
    <property type="term" value="C:cytoplasm"/>
    <property type="evidence" value="ECO:0007669"/>
    <property type="project" value="UniProtKB-SubCell"/>
</dbReference>
<dbReference type="GO" id="GO:0005524">
    <property type="term" value="F:ATP binding"/>
    <property type="evidence" value="ECO:0007669"/>
    <property type="project" value="UniProtKB-UniRule"/>
</dbReference>
<dbReference type="GO" id="GO:0140096">
    <property type="term" value="F:catalytic activity, acting on a protein"/>
    <property type="evidence" value="ECO:0007669"/>
    <property type="project" value="UniProtKB-ARBA"/>
</dbReference>
<dbReference type="GO" id="GO:0046872">
    <property type="term" value="F:metal ion binding"/>
    <property type="evidence" value="ECO:0007669"/>
    <property type="project" value="UniProtKB-KW"/>
</dbReference>
<dbReference type="GO" id="GO:0004829">
    <property type="term" value="F:threonine-tRNA ligase activity"/>
    <property type="evidence" value="ECO:0007669"/>
    <property type="project" value="UniProtKB-UniRule"/>
</dbReference>
<dbReference type="GO" id="GO:0016740">
    <property type="term" value="F:transferase activity"/>
    <property type="evidence" value="ECO:0007669"/>
    <property type="project" value="UniProtKB-ARBA"/>
</dbReference>
<dbReference type="GO" id="GO:0000049">
    <property type="term" value="F:tRNA binding"/>
    <property type="evidence" value="ECO:0007669"/>
    <property type="project" value="UniProtKB-KW"/>
</dbReference>
<dbReference type="GO" id="GO:0006435">
    <property type="term" value="P:threonyl-tRNA aminoacylation"/>
    <property type="evidence" value="ECO:0007669"/>
    <property type="project" value="UniProtKB-UniRule"/>
</dbReference>
<dbReference type="CDD" id="cd01667">
    <property type="entry name" value="TGS_ThrRS"/>
    <property type="match status" value="1"/>
</dbReference>
<dbReference type="CDD" id="cd00860">
    <property type="entry name" value="ThrRS_anticodon"/>
    <property type="match status" value="1"/>
</dbReference>
<dbReference type="CDD" id="cd00771">
    <property type="entry name" value="ThrRS_core"/>
    <property type="match status" value="1"/>
</dbReference>
<dbReference type="FunFam" id="3.10.20.30:FF:000005">
    <property type="entry name" value="Threonine--tRNA ligase"/>
    <property type="match status" value="1"/>
</dbReference>
<dbReference type="FunFam" id="3.30.54.20:FF:000002">
    <property type="entry name" value="Threonine--tRNA ligase"/>
    <property type="match status" value="1"/>
</dbReference>
<dbReference type="FunFam" id="3.30.930.10:FF:000002">
    <property type="entry name" value="Threonine--tRNA ligase"/>
    <property type="match status" value="1"/>
</dbReference>
<dbReference type="FunFam" id="3.40.50.800:FF:000001">
    <property type="entry name" value="Threonine--tRNA ligase"/>
    <property type="match status" value="1"/>
</dbReference>
<dbReference type="FunFam" id="3.30.980.10:FF:000005">
    <property type="entry name" value="Threonyl-tRNA synthetase, mitochondrial"/>
    <property type="match status" value="1"/>
</dbReference>
<dbReference type="Gene3D" id="3.10.20.30">
    <property type="match status" value="1"/>
</dbReference>
<dbReference type="Gene3D" id="3.30.54.20">
    <property type="match status" value="1"/>
</dbReference>
<dbReference type="Gene3D" id="3.40.50.800">
    <property type="entry name" value="Anticodon-binding domain"/>
    <property type="match status" value="1"/>
</dbReference>
<dbReference type="Gene3D" id="3.30.930.10">
    <property type="entry name" value="Bira Bifunctional Protein, Domain 2"/>
    <property type="match status" value="1"/>
</dbReference>
<dbReference type="Gene3D" id="3.30.980.10">
    <property type="entry name" value="Threonyl-trna Synthetase, Chain A, domain 2"/>
    <property type="match status" value="1"/>
</dbReference>
<dbReference type="HAMAP" id="MF_00184">
    <property type="entry name" value="Thr_tRNA_synth"/>
    <property type="match status" value="1"/>
</dbReference>
<dbReference type="InterPro" id="IPR002314">
    <property type="entry name" value="aa-tRNA-synt_IIb"/>
</dbReference>
<dbReference type="InterPro" id="IPR006195">
    <property type="entry name" value="aa-tRNA-synth_II"/>
</dbReference>
<dbReference type="InterPro" id="IPR045864">
    <property type="entry name" value="aa-tRNA-synth_II/BPL/LPL"/>
</dbReference>
<dbReference type="InterPro" id="IPR004154">
    <property type="entry name" value="Anticodon-bd"/>
</dbReference>
<dbReference type="InterPro" id="IPR036621">
    <property type="entry name" value="Anticodon-bd_dom_sf"/>
</dbReference>
<dbReference type="InterPro" id="IPR012675">
    <property type="entry name" value="Beta-grasp_dom_sf"/>
</dbReference>
<dbReference type="InterPro" id="IPR004095">
    <property type="entry name" value="TGS"/>
</dbReference>
<dbReference type="InterPro" id="IPR012676">
    <property type="entry name" value="TGS-like"/>
</dbReference>
<dbReference type="InterPro" id="IPR002320">
    <property type="entry name" value="Thr-tRNA-ligase_IIa"/>
</dbReference>
<dbReference type="InterPro" id="IPR018163">
    <property type="entry name" value="Thr/Ala-tRNA-synth_IIc_edit"/>
</dbReference>
<dbReference type="InterPro" id="IPR047246">
    <property type="entry name" value="ThrRS_anticodon"/>
</dbReference>
<dbReference type="InterPro" id="IPR033728">
    <property type="entry name" value="ThrRS_core"/>
</dbReference>
<dbReference type="InterPro" id="IPR012947">
    <property type="entry name" value="tRNA_SAD"/>
</dbReference>
<dbReference type="NCBIfam" id="TIGR00418">
    <property type="entry name" value="thrS"/>
    <property type="match status" value="1"/>
</dbReference>
<dbReference type="PANTHER" id="PTHR11451:SF56">
    <property type="entry name" value="THREONINE--TRNA LIGASE 1"/>
    <property type="match status" value="1"/>
</dbReference>
<dbReference type="PANTHER" id="PTHR11451">
    <property type="entry name" value="THREONINE-TRNA LIGASE"/>
    <property type="match status" value="1"/>
</dbReference>
<dbReference type="Pfam" id="PF03129">
    <property type="entry name" value="HGTP_anticodon"/>
    <property type="match status" value="1"/>
</dbReference>
<dbReference type="Pfam" id="PF02824">
    <property type="entry name" value="TGS"/>
    <property type="match status" value="1"/>
</dbReference>
<dbReference type="Pfam" id="PF00587">
    <property type="entry name" value="tRNA-synt_2b"/>
    <property type="match status" value="1"/>
</dbReference>
<dbReference type="Pfam" id="PF07973">
    <property type="entry name" value="tRNA_SAD"/>
    <property type="match status" value="1"/>
</dbReference>
<dbReference type="PRINTS" id="PR01047">
    <property type="entry name" value="TRNASYNTHTHR"/>
</dbReference>
<dbReference type="SMART" id="SM00863">
    <property type="entry name" value="tRNA_SAD"/>
    <property type="match status" value="1"/>
</dbReference>
<dbReference type="SUPFAM" id="SSF52954">
    <property type="entry name" value="Class II aaRS ABD-related"/>
    <property type="match status" value="1"/>
</dbReference>
<dbReference type="SUPFAM" id="SSF55681">
    <property type="entry name" value="Class II aaRS and biotin synthetases"/>
    <property type="match status" value="1"/>
</dbReference>
<dbReference type="SUPFAM" id="SSF81271">
    <property type="entry name" value="TGS-like"/>
    <property type="match status" value="1"/>
</dbReference>
<dbReference type="SUPFAM" id="SSF55186">
    <property type="entry name" value="ThrRS/AlaRS common domain"/>
    <property type="match status" value="1"/>
</dbReference>
<dbReference type="PROSITE" id="PS50862">
    <property type="entry name" value="AA_TRNA_LIGASE_II"/>
    <property type="match status" value="1"/>
</dbReference>
<dbReference type="PROSITE" id="PS51880">
    <property type="entry name" value="TGS"/>
    <property type="match status" value="1"/>
</dbReference>
<organism>
    <name type="scientific">Streptococcus mutans serotype c (strain ATCC 700610 / UA159)</name>
    <dbReference type="NCBI Taxonomy" id="210007"/>
    <lineage>
        <taxon>Bacteria</taxon>
        <taxon>Bacillati</taxon>
        <taxon>Bacillota</taxon>
        <taxon>Bacilli</taxon>
        <taxon>Lactobacillales</taxon>
        <taxon>Streptococcaceae</taxon>
        <taxon>Streptococcus</taxon>
    </lineage>
</organism>
<reference key="1">
    <citation type="journal article" date="2002" name="Proc. Natl. Acad. Sci. U.S.A.">
        <title>Genome sequence of Streptococcus mutans UA159, a cariogenic dental pathogen.</title>
        <authorList>
            <person name="Ajdic D.J."/>
            <person name="McShan W.M."/>
            <person name="McLaughlin R.E."/>
            <person name="Savic G."/>
            <person name="Chang J."/>
            <person name="Carson M.B."/>
            <person name="Primeaux C."/>
            <person name="Tian R."/>
            <person name="Kenton S."/>
            <person name="Jia H.G."/>
            <person name="Lin S.P."/>
            <person name="Qian Y."/>
            <person name="Li S."/>
            <person name="Zhu H."/>
            <person name="Najar F.Z."/>
            <person name="Lai H."/>
            <person name="White J."/>
            <person name="Roe B.A."/>
            <person name="Ferretti J.J."/>
        </authorList>
    </citation>
    <scope>NUCLEOTIDE SEQUENCE [LARGE SCALE GENOMIC DNA]</scope>
    <source>
        <strain>ATCC 700610 / UA159</strain>
    </source>
</reference>
<gene>
    <name evidence="1" type="primary">thrS</name>
    <name type="ordered locus">SMU_1586</name>
</gene>
<proteinExistence type="inferred from homology"/>
<comment type="function">
    <text evidence="1">Catalyzes the attachment of threonine to tRNA(Thr) in a two-step reaction: L-threonine is first activated by ATP to form Thr-AMP and then transferred to the acceptor end of tRNA(Thr). Also edits incorrectly charged L-seryl-tRNA(Thr).</text>
</comment>
<comment type="catalytic activity">
    <reaction evidence="1">
        <text>tRNA(Thr) + L-threonine + ATP = L-threonyl-tRNA(Thr) + AMP + diphosphate + H(+)</text>
        <dbReference type="Rhea" id="RHEA:24624"/>
        <dbReference type="Rhea" id="RHEA-COMP:9670"/>
        <dbReference type="Rhea" id="RHEA-COMP:9704"/>
        <dbReference type="ChEBI" id="CHEBI:15378"/>
        <dbReference type="ChEBI" id="CHEBI:30616"/>
        <dbReference type="ChEBI" id="CHEBI:33019"/>
        <dbReference type="ChEBI" id="CHEBI:57926"/>
        <dbReference type="ChEBI" id="CHEBI:78442"/>
        <dbReference type="ChEBI" id="CHEBI:78534"/>
        <dbReference type="ChEBI" id="CHEBI:456215"/>
        <dbReference type="EC" id="6.1.1.3"/>
    </reaction>
</comment>
<comment type="cofactor">
    <cofactor evidence="1">
        <name>Zn(2+)</name>
        <dbReference type="ChEBI" id="CHEBI:29105"/>
    </cofactor>
    <text evidence="1">Binds 1 zinc ion per subunit.</text>
</comment>
<comment type="subunit">
    <text evidence="1">Homodimer.</text>
</comment>
<comment type="subcellular location">
    <subcellularLocation>
        <location evidence="1">Cytoplasm</location>
    </subcellularLocation>
</comment>
<comment type="similarity">
    <text evidence="1">Belongs to the class-II aminoacyl-tRNA synthetase family.</text>
</comment>
<evidence type="ECO:0000255" key="1">
    <source>
        <dbReference type="HAMAP-Rule" id="MF_00184"/>
    </source>
</evidence>
<evidence type="ECO:0000255" key="2">
    <source>
        <dbReference type="PROSITE-ProRule" id="PRU01228"/>
    </source>
</evidence>
<protein>
    <recommendedName>
        <fullName evidence="1">Threonine--tRNA ligase</fullName>
        <ecNumber evidence="1">6.1.1.3</ecNumber>
    </recommendedName>
    <alternativeName>
        <fullName evidence="1">Threonyl-tRNA synthetase</fullName>
        <shortName evidence="1">ThrRS</shortName>
    </alternativeName>
</protein>
<name>SYT_STRMU</name>
<keyword id="KW-0030">Aminoacyl-tRNA synthetase</keyword>
<keyword id="KW-0067">ATP-binding</keyword>
<keyword id="KW-0963">Cytoplasm</keyword>
<keyword id="KW-0436">Ligase</keyword>
<keyword id="KW-0479">Metal-binding</keyword>
<keyword id="KW-0547">Nucleotide-binding</keyword>
<keyword id="KW-0648">Protein biosynthesis</keyword>
<keyword id="KW-1185">Reference proteome</keyword>
<keyword id="KW-0694">RNA-binding</keyword>
<keyword id="KW-0820">tRNA-binding</keyword>
<keyword id="KW-0862">Zinc</keyword>
<feature type="chain" id="PRO_0000101059" description="Threonine--tRNA ligase">
    <location>
        <begin position="1"/>
        <end position="649"/>
    </location>
</feature>
<feature type="domain" description="TGS" evidence="2">
    <location>
        <begin position="1"/>
        <end position="61"/>
    </location>
</feature>
<feature type="region of interest" description="Catalytic" evidence="1">
    <location>
        <begin position="242"/>
        <end position="540"/>
    </location>
</feature>
<feature type="binding site" evidence="1">
    <location>
        <position position="336"/>
    </location>
    <ligand>
        <name>Zn(2+)</name>
        <dbReference type="ChEBI" id="CHEBI:29105"/>
    </ligand>
</feature>
<feature type="binding site" evidence="1">
    <location>
        <position position="387"/>
    </location>
    <ligand>
        <name>Zn(2+)</name>
        <dbReference type="ChEBI" id="CHEBI:29105"/>
    </ligand>
</feature>
<feature type="binding site" evidence="1">
    <location>
        <position position="517"/>
    </location>
    <ligand>
        <name>Zn(2+)</name>
        <dbReference type="ChEBI" id="CHEBI:29105"/>
    </ligand>
</feature>
<sequence>MIKITFPDGAVREFEIGTTTSEIAESISKSLAKKALAGKFNGQLIDTTRAITQDGSIEIVTPDHEDALDILRHSAAHLFAQAARRLFPDIHLGVGPAIQDGFYYDTDNEAGQISNEDLPRIEEEMKKIVKENFPSVREEVTKDEAREIFKNDPYKLELIEEHSEDAGGLTIYRQGEYVDLCRGPHVPSTGRIQVFHLLNVAGAYWRGDSNNAMMQRIYGTAWFDKKDLKSYLKRLEEAKERDHRKLGKELDLFMISQEVGQGLPFWLPDGATIRRIIERYITDKEVASGYQHVYTPPIASVDLYKTSGHWDHYREDMFPTMDMGDGESFVLRPMNCPHHIEVYKNHVHSYRELPIRIAELGMMHRYEKSGALSGLQRVREMTLNDGHTFVALDQVEDEFKRTLQLIIDVYEDFNLTDYSFRLSYRDPNDTHKYFDDDEMWEKSQTMLKAAMDDMGLDYYEAEGEAAFYGPKLDIQVKTALGNDETLSTIQLDFLLPERFELTYIGADGEEHRPVMIHRGIVSTMERFTAYLIETYKGAFPTWLAPHQVTVIPISNEAHIDYAWEVAKELRDHGIRADVDDRNEKMQYKIRQSQTKKVPYQLIVGDKEVENGTVNVRRYGSKQTHTESIAEFRENILADIKRKSRPDNAK</sequence>
<accession>Q8DT12</accession>